<accession>B1YRQ2</accession>
<proteinExistence type="inferred from homology"/>
<sequence length="121" mass="13640">MARIAGVNIPNHQHTEIGLTAIFGIGRTRSRSICSAAGVEFSKKVKDLTDADLEKLREEVGKFIVEGDLRREVTMNIKRLMDLGCYRGVRHRKGLPMRGQRTRTNARTRKGPRRAAQALKK</sequence>
<evidence type="ECO:0000255" key="1">
    <source>
        <dbReference type="HAMAP-Rule" id="MF_01315"/>
    </source>
</evidence>
<evidence type="ECO:0000256" key="2">
    <source>
        <dbReference type="SAM" id="MobiDB-lite"/>
    </source>
</evidence>
<evidence type="ECO:0000305" key="3"/>
<dbReference type="EMBL" id="CP001025">
    <property type="protein sequence ID" value="ACB62800.1"/>
    <property type="molecule type" value="Genomic_DNA"/>
</dbReference>
<dbReference type="RefSeq" id="WP_006752933.1">
    <property type="nucleotide sequence ID" value="NC_010551.1"/>
</dbReference>
<dbReference type="SMR" id="B1YRQ2"/>
<dbReference type="GeneID" id="93084295"/>
<dbReference type="KEGG" id="bac:BamMC406_0299"/>
<dbReference type="HOGENOM" id="CLU_103849_1_2_4"/>
<dbReference type="OrthoDB" id="9803610at2"/>
<dbReference type="Proteomes" id="UP000001680">
    <property type="component" value="Chromosome 1"/>
</dbReference>
<dbReference type="GO" id="GO:0005829">
    <property type="term" value="C:cytosol"/>
    <property type="evidence" value="ECO:0007669"/>
    <property type="project" value="TreeGrafter"/>
</dbReference>
<dbReference type="GO" id="GO:0015935">
    <property type="term" value="C:small ribosomal subunit"/>
    <property type="evidence" value="ECO:0007669"/>
    <property type="project" value="TreeGrafter"/>
</dbReference>
<dbReference type="GO" id="GO:0019843">
    <property type="term" value="F:rRNA binding"/>
    <property type="evidence" value="ECO:0007669"/>
    <property type="project" value="UniProtKB-UniRule"/>
</dbReference>
<dbReference type="GO" id="GO:0003735">
    <property type="term" value="F:structural constituent of ribosome"/>
    <property type="evidence" value="ECO:0007669"/>
    <property type="project" value="InterPro"/>
</dbReference>
<dbReference type="GO" id="GO:0000049">
    <property type="term" value="F:tRNA binding"/>
    <property type="evidence" value="ECO:0007669"/>
    <property type="project" value="UniProtKB-UniRule"/>
</dbReference>
<dbReference type="GO" id="GO:0006412">
    <property type="term" value="P:translation"/>
    <property type="evidence" value="ECO:0007669"/>
    <property type="project" value="UniProtKB-UniRule"/>
</dbReference>
<dbReference type="FunFam" id="1.10.8.50:FF:000001">
    <property type="entry name" value="30S ribosomal protein S13"/>
    <property type="match status" value="1"/>
</dbReference>
<dbReference type="FunFam" id="4.10.910.10:FF:000001">
    <property type="entry name" value="30S ribosomal protein S13"/>
    <property type="match status" value="1"/>
</dbReference>
<dbReference type="Gene3D" id="1.10.8.50">
    <property type="match status" value="1"/>
</dbReference>
<dbReference type="Gene3D" id="4.10.910.10">
    <property type="entry name" value="30s ribosomal protein s13, domain 2"/>
    <property type="match status" value="1"/>
</dbReference>
<dbReference type="HAMAP" id="MF_01315">
    <property type="entry name" value="Ribosomal_uS13"/>
    <property type="match status" value="1"/>
</dbReference>
<dbReference type="InterPro" id="IPR027437">
    <property type="entry name" value="Rbsml_uS13_C"/>
</dbReference>
<dbReference type="InterPro" id="IPR001892">
    <property type="entry name" value="Ribosomal_uS13"/>
</dbReference>
<dbReference type="InterPro" id="IPR010979">
    <property type="entry name" value="Ribosomal_uS13-like_H2TH"/>
</dbReference>
<dbReference type="InterPro" id="IPR019980">
    <property type="entry name" value="Ribosomal_uS13_bac-type"/>
</dbReference>
<dbReference type="InterPro" id="IPR018269">
    <property type="entry name" value="Ribosomal_uS13_CS"/>
</dbReference>
<dbReference type="NCBIfam" id="TIGR03631">
    <property type="entry name" value="uS13_bact"/>
    <property type="match status" value="1"/>
</dbReference>
<dbReference type="PANTHER" id="PTHR10871">
    <property type="entry name" value="30S RIBOSOMAL PROTEIN S13/40S RIBOSOMAL PROTEIN S18"/>
    <property type="match status" value="1"/>
</dbReference>
<dbReference type="PANTHER" id="PTHR10871:SF1">
    <property type="entry name" value="SMALL RIBOSOMAL SUBUNIT PROTEIN US13M"/>
    <property type="match status" value="1"/>
</dbReference>
<dbReference type="Pfam" id="PF00416">
    <property type="entry name" value="Ribosomal_S13"/>
    <property type="match status" value="1"/>
</dbReference>
<dbReference type="PIRSF" id="PIRSF002134">
    <property type="entry name" value="Ribosomal_S13"/>
    <property type="match status" value="1"/>
</dbReference>
<dbReference type="SUPFAM" id="SSF46946">
    <property type="entry name" value="S13-like H2TH domain"/>
    <property type="match status" value="1"/>
</dbReference>
<dbReference type="PROSITE" id="PS00646">
    <property type="entry name" value="RIBOSOMAL_S13_1"/>
    <property type="match status" value="1"/>
</dbReference>
<dbReference type="PROSITE" id="PS50159">
    <property type="entry name" value="RIBOSOMAL_S13_2"/>
    <property type="match status" value="1"/>
</dbReference>
<reference key="1">
    <citation type="submission" date="2008-04" db="EMBL/GenBank/DDBJ databases">
        <title>Complete sequence of chromosome 1 of Burkholderia ambifaria MC40-6.</title>
        <authorList>
            <person name="Copeland A."/>
            <person name="Lucas S."/>
            <person name="Lapidus A."/>
            <person name="Glavina del Rio T."/>
            <person name="Dalin E."/>
            <person name="Tice H."/>
            <person name="Pitluck S."/>
            <person name="Chain P."/>
            <person name="Malfatti S."/>
            <person name="Shin M."/>
            <person name="Vergez L."/>
            <person name="Lang D."/>
            <person name="Schmutz J."/>
            <person name="Larimer F."/>
            <person name="Land M."/>
            <person name="Hauser L."/>
            <person name="Kyrpides N."/>
            <person name="Lykidis A."/>
            <person name="Ramette A."/>
            <person name="Konstantinidis K."/>
            <person name="Tiedje J."/>
            <person name="Richardson P."/>
        </authorList>
    </citation>
    <scope>NUCLEOTIDE SEQUENCE [LARGE SCALE GENOMIC DNA]</scope>
    <source>
        <strain>MC40-6</strain>
    </source>
</reference>
<name>RS13_BURA4</name>
<gene>
    <name evidence="1" type="primary">rpsM</name>
    <name type="ordered locus">BamMC406_0299</name>
</gene>
<organism>
    <name type="scientific">Burkholderia ambifaria (strain MC40-6)</name>
    <dbReference type="NCBI Taxonomy" id="398577"/>
    <lineage>
        <taxon>Bacteria</taxon>
        <taxon>Pseudomonadati</taxon>
        <taxon>Pseudomonadota</taxon>
        <taxon>Betaproteobacteria</taxon>
        <taxon>Burkholderiales</taxon>
        <taxon>Burkholderiaceae</taxon>
        <taxon>Burkholderia</taxon>
        <taxon>Burkholderia cepacia complex</taxon>
    </lineage>
</organism>
<protein>
    <recommendedName>
        <fullName evidence="1">Small ribosomal subunit protein uS13</fullName>
    </recommendedName>
    <alternativeName>
        <fullName evidence="3">30S ribosomal protein S13</fullName>
    </alternativeName>
</protein>
<keyword id="KW-0687">Ribonucleoprotein</keyword>
<keyword id="KW-0689">Ribosomal protein</keyword>
<keyword id="KW-0694">RNA-binding</keyword>
<keyword id="KW-0699">rRNA-binding</keyword>
<keyword id="KW-0820">tRNA-binding</keyword>
<comment type="function">
    <text evidence="1">Located at the top of the head of the 30S subunit, it contacts several helices of the 16S rRNA. In the 70S ribosome it contacts the 23S rRNA (bridge B1a) and protein L5 of the 50S subunit (bridge B1b), connecting the 2 subunits; these bridges are implicated in subunit movement. Contacts the tRNAs in the A and P-sites.</text>
</comment>
<comment type="subunit">
    <text evidence="1">Part of the 30S ribosomal subunit. Forms a loose heterodimer with protein S19. Forms two bridges to the 50S subunit in the 70S ribosome.</text>
</comment>
<comment type="similarity">
    <text evidence="1">Belongs to the universal ribosomal protein uS13 family.</text>
</comment>
<feature type="chain" id="PRO_1000141229" description="Small ribosomal subunit protein uS13">
    <location>
        <begin position="1"/>
        <end position="121"/>
    </location>
</feature>
<feature type="region of interest" description="Disordered" evidence="2">
    <location>
        <begin position="93"/>
        <end position="121"/>
    </location>
</feature>